<accession>A7H021</accession>
<reference key="1">
    <citation type="submission" date="2007-07" db="EMBL/GenBank/DDBJ databases">
        <title>Genome sequence of Campylobacter curvus 525.92 isolated from human feces.</title>
        <authorList>
            <person name="Fouts D.E."/>
            <person name="Mongodin E.F."/>
            <person name="Puiu D."/>
            <person name="Sebastian Y."/>
            <person name="Miller W.G."/>
            <person name="Mandrell R.E."/>
            <person name="Lastovica A.J."/>
            <person name="Nelson K.E."/>
        </authorList>
    </citation>
    <scope>NUCLEOTIDE SEQUENCE [LARGE SCALE GENOMIC DNA]</scope>
    <source>
        <strain>525.92</strain>
    </source>
</reference>
<evidence type="ECO:0000255" key="1">
    <source>
        <dbReference type="HAMAP-Rule" id="MF_01398"/>
    </source>
</evidence>
<dbReference type="EMBL" id="CP000767">
    <property type="protein sequence ID" value="EAU01080.1"/>
    <property type="molecule type" value="Genomic_DNA"/>
</dbReference>
<dbReference type="RefSeq" id="WP_009649348.1">
    <property type="nucleotide sequence ID" value="NC_009715.2"/>
</dbReference>
<dbReference type="SMR" id="A7H021"/>
<dbReference type="STRING" id="360105.CCV52592_1734"/>
<dbReference type="KEGG" id="ccv:CCV52592_1734"/>
<dbReference type="HOGENOM" id="CLU_129781_0_0_7"/>
<dbReference type="OrthoDB" id="5373033at2"/>
<dbReference type="Proteomes" id="UP000006380">
    <property type="component" value="Chromosome"/>
</dbReference>
<dbReference type="GO" id="GO:0005886">
    <property type="term" value="C:plasma membrane"/>
    <property type="evidence" value="ECO:0007669"/>
    <property type="project" value="UniProtKB-SubCell"/>
</dbReference>
<dbReference type="GO" id="GO:0045259">
    <property type="term" value="C:proton-transporting ATP synthase complex"/>
    <property type="evidence" value="ECO:0007669"/>
    <property type="project" value="UniProtKB-KW"/>
</dbReference>
<dbReference type="GO" id="GO:0046933">
    <property type="term" value="F:proton-transporting ATP synthase activity, rotational mechanism"/>
    <property type="evidence" value="ECO:0007669"/>
    <property type="project" value="UniProtKB-UniRule"/>
</dbReference>
<dbReference type="CDD" id="cd06503">
    <property type="entry name" value="ATP-synt_Fo_b"/>
    <property type="match status" value="1"/>
</dbReference>
<dbReference type="HAMAP" id="MF_01398">
    <property type="entry name" value="ATP_synth_b_bprime"/>
    <property type="match status" value="1"/>
</dbReference>
<dbReference type="InterPro" id="IPR002146">
    <property type="entry name" value="ATP_synth_b/b'su_bac/chlpt"/>
</dbReference>
<dbReference type="NCBIfam" id="NF006292">
    <property type="entry name" value="PRK08475.1"/>
    <property type="match status" value="1"/>
</dbReference>
<dbReference type="Pfam" id="PF00430">
    <property type="entry name" value="ATP-synt_B"/>
    <property type="match status" value="1"/>
</dbReference>
<feature type="chain" id="PRO_0000368401" description="ATP synthase subunit b">
    <location>
        <begin position="1"/>
        <end position="169"/>
    </location>
</feature>
<feature type="transmembrane region" description="Helical" evidence="1">
    <location>
        <begin position="3"/>
        <end position="23"/>
    </location>
</feature>
<proteinExistence type="inferred from homology"/>
<protein>
    <recommendedName>
        <fullName evidence="1">ATP synthase subunit b</fullName>
    </recommendedName>
    <alternativeName>
        <fullName evidence="1">ATP synthase F(0) sector subunit b</fullName>
    </alternativeName>
    <alternativeName>
        <fullName evidence="1">ATPase subunit I</fullName>
    </alternativeName>
    <alternativeName>
        <fullName evidence="1">F-type ATPase subunit b</fullName>
        <shortName evidence="1">F-ATPase subunit b</shortName>
    </alternativeName>
</protein>
<keyword id="KW-0066">ATP synthesis</keyword>
<keyword id="KW-0997">Cell inner membrane</keyword>
<keyword id="KW-1003">Cell membrane</keyword>
<keyword id="KW-0138">CF(0)</keyword>
<keyword id="KW-0375">Hydrogen ion transport</keyword>
<keyword id="KW-0406">Ion transport</keyword>
<keyword id="KW-0472">Membrane</keyword>
<keyword id="KW-1185">Reference proteome</keyword>
<keyword id="KW-0812">Transmembrane</keyword>
<keyword id="KW-1133">Transmembrane helix</keyword>
<keyword id="KW-0813">Transport</keyword>
<name>ATPF_CAMC5</name>
<sequence length="169" mass="19315">MRIKILLLVLPFFAFASEHGGVNYDIIERALNFLLFFGILLYFIAKPLKDLYQSRIDKIAGKLESIQEKLRASKLKKDDALKRVEEAKLNASSLVETARKEAVNLAQKVKKDAELEMANIQKSFKDQKDFEERKTTKNVVSEILNDIFASDSLKVDQKELINIILKKVG</sequence>
<gene>
    <name evidence="1" type="primary">atpF</name>
    <name type="ordered locus">Ccur92_15090</name>
    <name type="ORF">CCV52592_1734</name>
</gene>
<organism>
    <name type="scientific">Campylobacter curvus (strain 525.92)</name>
    <dbReference type="NCBI Taxonomy" id="360105"/>
    <lineage>
        <taxon>Bacteria</taxon>
        <taxon>Pseudomonadati</taxon>
        <taxon>Campylobacterota</taxon>
        <taxon>Epsilonproteobacteria</taxon>
        <taxon>Campylobacterales</taxon>
        <taxon>Campylobacteraceae</taxon>
        <taxon>Campylobacter</taxon>
    </lineage>
</organism>
<comment type="function">
    <text evidence="1">F(1)F(0) ATP synthase produces ATP from ADP in the presence of a proton or sodium gradient. F-type ATPases consist of two structural domains, F(1) containing the extramembraneous catalytic core and F(0) containing the membrane proton channel, linked together by a central stalk and a peripheral stalk. During catalysis, ATP synthesis in the catalytic domain of F(1) is coupled via a rotary mechanism of the central stalk subunits to proton translocation.</text>
</comment>
<comment type="function">
    <text evidence="1">Component of the F(0) channel, it forms part of the peripheral stalk, linking F(1) to F(0).</text>
</comment>
<comment type="subunit">
    <text evidence="1">F-type ATPases have 2 components, F(1) - the catalytic core - and F(0) - the membrane proton channel. F(1) has five subunits: alpha(3), beta(3), gamma(1), delta(1), epsilon(1). F(0) has three main subunits: a(1), b(2) and c(10-14). The alpha and beta chains form an alternating ring which encloses part of the gamma chain. F(1) is attached to F(0) by a central stalk formed by the gamma and epsilon chains, while a peripheral stalk is formed by the delta and b chains.</text>
</comment>
<comment type="subcellular location">
    <subcellularLocation>
        <location evidence="1">Cell inner membrane</location>
        <topology evidence="1">Single-pass membrane protein</topology>
    </subcellularLocation>
</comment>
<comment type="similarity">
    <text evidence="1">Belongs to the ATPase B chain family.</text>
</comment>